<evidence type="ECO:0000250" key="1">
    <source>
        <dbReference type="UniProtKB" id="D5ARP7"/>
    </source>
</evidence>
<evidence type="ECO:0000250" key="2">
    <source>
        <dbReference type="UniProtKB" id="D9IA45"/>
    </source>
</evidence>
<evidence type="ECO:0000250" key="3">
    <source>
        <dbReference type="UniProtKB" id="Q3J015"/>
    </source>
</evidence>
<evidence type="ECO:0000250" key="4">
    <source>
        <dbReference type="UniProtKB" id="Q52689"/>
    </source>
</evidence>
<evidence type="ECO:0000255" key="5"/>
<evidence type="ECO:0000255" key="6">
    <source>
        <dbReference type="PROSITE-ProRule" id="PRU00433"/>
    </source>
</evidence>
<evidence type="ECO:0000269" key="7">
    <source>
    </source>
</evidence>
<evidence type="ECO:0000269" key="8">
    <source>
    </source>
</evidence>
<evidence type="ECO:0000305" key="9"/>
<evidence type="ECO:0000312" key="10">
    <source>
        <dbReference type="EMBL" id="AAM76067.1"/>
    </source>
</evidence>
<evidence type="ECO:0000312" key="11">
    <source>
        <dbReference type="EMBL" id="ADJ00006.1"/>
    </source>
</evidence>
<reference evidence="9 10" key="1">
    <citation type="journal article" date="2002" name="J. Biol. Chem.">
        <title>Molecular and spectroscopic analysis of the cytochrome cbb(3) oxidase from Pseudomonas stutzeri.</title>
        <authorList>
            <person name="Pitcher R.S."/>
            <person name="Cheesman M.R."/>
            <person name="Watmough N.J."/>
        </authorList>
    </citation>
    <scope>NUCLEOTIDE SEQUENCE [GENOMIC DNA]</scope>
    <scope>FUNCTION</scope>
    <scope>CATALYTIC ACTIVITY OF THE CYTOCHROME C OXIDASE COMPLEX</scope>
    <scope>COFACTOR</scope>
    <scope>SUBUNIT</scope>
    <scope>SUBCELLULAR LOCATION</scope>
    <scope>MASS SPECTROMETRY</scope>
    <scope>MAGNETIC CIRCULAR DICHROISM</scope>
    <scope>EPR SPECTROSCOPY</scope>
</reference>
<reference evidence="11" key="2">
    <citation type="journal article" date="2010" name="Science">
        <title>The structure of cbb3 cytochrome oxidase provides insights into proton pumping.</title>
        <authorList>
            <person name="Buschmann S."/>
            <person name="Warkentin E."/>
            <person name="Xie H."/>
            <person name="Langer J.D."/>
            <person name="Ermler U."/>
            <person name="Michel H."/>
        </authorList>
    </citation>
    <scope>NUCLEOTIDE SEQUENCE [GENOMIC DNA]</scope>
    <source>
        <strain evidence="11">ATCC 14405 / JCM 20778 / CIP 107696 / IAM 12931 / LMG 2243 / NCIMB 568 / Baumann 218 / ZoBell 632</strain>
    </source>
</reference>
<reference evidence="9" key="3">
    <citation type="journal article" date="2003" name="Biochemistry">
        <title>Complex interactions of carbon monoxide with reduced cytochrome cbb3 oxidase from Pseudomonas stutzeri.</title>
        <authorList>
            <person name="Pitcher R.S."/>
            <person name="Brittain T."/>
            <person name="Watmough N.J."/>
        </authorList>
    </citation>
    <scope>FUNCTION</scope>
    <scope>COFACTOR</scope>
    <scope>SUBSTRATE ANALOG-PROTEIN INTERACTION AND KINETICS</scope>
</reference>
<gene>
    <name evidence="11" type="primary">ccoP2</name>
</gene>
<feature type="chain" id="PRO_0000412289" description="Cbb3-type cytochrome c oxidase subunit CcoP2">
    <location>
        <begin position="1"/>
        <end position="305"/>
    </location>
</feature>
<feature type="transmembrane region" description="Helical" evidence="5">
    <location>
        <begin position="4"/>
        <end position="24"/>
    </location>
</feature>
<feature type="transmembrane region" description="Helical" evidence="5">
    <location>
        <begin position="57"/>
        <end position="77"/>
    </location>
</feature>
<feature type="domain" description="Cytochrome c 1" evidence="6">
    <location>
        <begin position="130"/>
        <end position="209"/>
    </location>
</feature>
<feature type="domain" description="Cytochrome c 2" evidence="6">
    <location>
        <begin position="219"/>
        <end position="300"/>
    </location>
</feature>
<feature type="binding site" description="covalent" evidence="2">
    <location>
        <position position="143"/>
    </location>
    <ligand>
        <name>heme c</name>
        <dbReference type="ChEBI" id="CHEBI:61717"/>
        <label>1</label>
    </ligand>
</feature>
<feature type="binding site" description="covalent" evidence="2">
    <location>
        <position position="146"/>
    </location>
    <ligand>
        <name>heme c</name>
        <dbReference type="ChEBI" id="CHEBI:61717"/>
        <label>1</label>
    </ligand>
</feature>
<feature type="binding site" description="axial binding residue" evidence="2">
    <location>
        <position position="147"/>
    </location>
    <ligand>
        <name>heme c</name>
        <dbReference type="ChEBI" id="CHEBI:61717"/>
        <label>1</label>
    </ligand>
    <ligandPart>
        <name>Fe</name>
        <dbReference type="ChEBI" id="CHEBI:18248"/>
    </ligandPart>
</feature>
<feature type="binding site" description="axial binding residue" evidence="2">
    <location>
        <position position="186"/>
    </location>
    <ligand>
        <name>heme c</name>
        <dbReference type="ChEBI" id="CHEBI:61717"/>
        <label>2</label>
    </ligand>
    <ligandPart>
        <name>Fe</name>
        <dbReference type="ChEBI" id="CHEBI:18248"/>
    </ligandPart>
</feature>
<feature type="binding site" description="covalent" evidence="2">
    <location>
        <position position="232"/>
    </location>
    <ligand>
        <name>heme c</name>
        <dbReference type="ChEBI" id="CHEBI:61717"/>
        <label>2</label>
    </ligand>
</feature>
<feature type="binding site" description="covalent" evidence="2">
    <location>
        <position position="235"/>
    </location>
    <ligand>
        <name>heme c</name>
        <dbReference type="ChEBI" id="CHEBI:61717"/>
        <label>2</label>
    </ligand>
</feature>
<feature type="binding site" description="axial binding residue" evidence="2">
    <location>
        <position position="236"/>
    </location>
    <ligand>
        <name>heme c</name>
        <dbReference type="ChEBI" id="CHEBI:61717"/>
        <label>2</label>
    </ligand>
    <ligandPart>
        <name>Fe</name>
        <dbReference type="ChEBI" id="CHEBI:18248"/>
    </ligandPart>
</feature>
<feature type="binding site" description="axial binding residue" evidence="2">
    <location>
        <position position="277"/>
    </location>
    <ligand>
        <name>heme c</name>
        <dbReference type="ChEBI" id="CHEBI:61717"/>
        <label>1</label>
    </ligand>
    <ligandPart>
        <name>Fe</name>
        <dbReference type="ChEBI" id="CHEBI:18248"/>
    </ligandPart>
</feature>
<proteinExistence type="evidence at protein level"/>
<protein>
    <recommendedName>
        <fullName evidence="2">Cbb3-type cytochrome c oxidase subunit CcoP2</fullName>
        <shortName evidence="1">Cbb3-Cox subunit CcoP2</shortName>
    </recommendedName>
    <alternativeName>
        <fullName evidence="4">C-type cytochrome CcoP2</fullName>
        <shortName evidence="1">Cyt c(P2)</shortName>
    </alternativeName>
    <alternativeName>
        <fullName evidence="11">Cytochrome c oxidase subunit III</fullName>
    </alternativeName>
</protein>
<name>CCOP2_STUST</name>
<sequence>MTSFWSWYVTLLSLGTIAALVWLLLATRKGQRPDSTEETVGHSYDGIEEYDNPLPRWWFMLFVGTVIFALGYLVLYPGLGNWKGILPGYEGGWTQVKEWQREMDKANEQYGPLYAKYAAMPVEEVAKDPQALKMGGRLFASNCSVCHGSDAKGAYGFPNLTDDDWLWGGEPETIKTTILHGRQAVMPGWKDVIGEEGIRNVAGYVRSLSGRDTPEGISVDIEQGQKIFAANCVVCHGPEAKGVTAMGAPNLTDNVWLYGSSFAQIQQTLRYGRNGRMPAQEAILGNDKVHLLAAYVYSLSQQPEQ</sequence>
<accession>Q8KS19</accession>
<organism>
    <name type="scientific">Stutzerimonas stutzeri</name>
    <name type="common">Pseudomonas stutzeri</name>
    <dbReference type="NCBI Taxonomy" id="316"/>
    <lineage>
        <taxon>Bacteria</taxon>
        <taxon>Pseudomonadati</taxon>
        <taxon>Pseudomonadota</taxon>
        <taxon>Gammaproteobacteria</taxon>
        <taxon>Pseudomonadales</taxon>
        <taxon>Pseudomonadaceae</taxon>
        <taxon>Stutzerimonas</taxon>
    </lineage>
</organism>
<keyword id="KW-0997">Cell inner membrane</keyword>
<keyword id="KW-1003">Cell membrane</keyword>
<keyword id="KW-0249">Electron transport</keyword>
<keyword id="KW-0349">Heme</keyword>
<keyword id="KW-0375">Hydrogen ion transport</keyword>
<keyword id="KW-0406">Ion transport</keyword>
<keyword id="KW-0408">Iron</keyword>
<keyword id="KW-0472">Membrane</keyword>
<keyword id="KW-0479">Metal-binding</keyword>
<keyword id="KW-0560">Oxidoreductase</keyword>
<keyword id="KW-0677">Repeat</keyword>
<keyword id="KW-0679">Respiratory chain</keyword>
<keyword id="KW-0812">Transmembrane</keyword>
<keyword id="KW-1133">Transmembrane helix</keyword>
<keyword id="KW-0813">Transport</keyword>
<comment type="function">
    <text evidence="2 3 7 8">C-type cytochrome. Part of the cbb3-type cytochrome c oxidase complex. CcoP subunit is required for transferring electrons from donor cytochrome c via its heme groups to CcoO subunit. From there, electrons are shuttled to the catalytic binuclear center of CcoN subunit where oxygen reduction takes place. The complex also functions as a proton pump.</text>
</comment>
<comment type="cofactor">
    <cofactor evidence="2 7 8">
        <name>heme c</name>
        <dbReference type="ChEBI" id="CHEBI:61717"/>
    </cofactor>
    <text evidence="2 7 8">Binds 2 heme C groups per subunit.</text>
</comment>
<comment type="pathway">
    <text evidence="1">Energy metabolism; oxidative phosphorylation.</text>
</comment>
<comment type="subunit">
    <text evidence="7">Component of the cbb3-type cytochrome c oxidase at least composed of CcoN, CcoO, CcoQ and CcoP.</text>
</comment>
<comment type="subcellular location">
    <subcellularLocation>
        <location evidence="7">Cell inner membrane</location>
        <topology evidence="5 7">Multi-pass membrane protein</topology>
    </subcellularLocation>
</comment>
<comment type="mass spectrometry"/>
<comment type="similarity">
    <text evidence="9">Belongs to the CcoP / FixP family.</text>
</comment>
<dbReference type="EMBL" id="AF521004">
    <property type="protein sequence ID" value="AAM76067.1"/>
    <property type="molecule type" value="Genomic_DNA"/>
</dbReference>
<dbReference type="EMBL" id="HM130676">
    <property type="protein sequence ID" value="ADJ00006.1"/>
    <property type="molecule type" value="Genomic_DNA"/>
</dbReference>
<dbReference type="RefSeq" id="WP_003285367.1">
    <property type="nucleotide sequence ID" value="NZ_CP036186.1"/>
</dbReference>
<dbReference type="SMR" id="Q8KS19"/>
<dbReference type="eggNOG" id="COG2010">
    <property type="taxonomic scope" value="Bacteria"/>
</dbReference>
<dbReference type="UniPathway" id="UPA00705"/>
<dbReference type="GO" id="GO:0005886">
    <property type="term" value="C:plasma membrane"/>
    <property type="evidence" value="ECO:0007669"/>
    <property type="project" value="UniProtKB-SubCell"/>
</dbReference>
<dbReference type="GO" id="GO:0009055">
    <property type="term" value="F:electron transfer activity"/>
    <property type="evidence" value="ECO:0007669"/>
    <property type="project" value="InterPro"/>
</dbReference>
<dbReference type="GO" id="GO:0020037">
    <property type="term" value="F:heme binding"/>
    <property type="evidence" value="ECO:0007669"/>
    <property type="project" value="InterPro"/>
</dbReference>
<dbReference type="GO" id="GO:0005506">
    <property type="term" value="F:iron ion binding"/>
    <property type="evidence" value="ECO:0007669"/>
    <property type="project" value="InterPro"/>
</dbReference>
<dbReference type="GO" id="GO:0016491">
    <property type="term" value="F:oxidoreductase activity"/>
    <property type="evidence" value="ECO:0007669"/>
    <property type="project" value="UniProtKB-KW"/>
</dbReference>
<dbReference type="GO" id="GO:0006119">
    <property type="term" value="P:oxidative phosphorylation"/>
    <property type="evidence" value="ECO:0007669"/>
    <property type="project" value="UniProtKB-UniPathway"/>
</dbReference>
<dbReference type="GO" id="GO:1902600">
    <property type="term" value="P:proton transmembrane transport"/>
    <property type="evidence" value="ECO:0007669"/>
    <property type="project" value="UniProtKB-KW"/>
</dbReference>
<dbReference type="FunFam" id="1.10.760.10:FF:000013">
    <property type="entry name" value="Cbb3-type cytochrome c oxidase subunit"/>
    <property type="match status" value="1"/>
</dbReference>
<dbReference type="FunFam" id="1.10.760.10:FF:000015">
    <property type="entry name" value="Cbb3-type cytochrome c oxidase subunit"/>
    <property type="match status" value="1"/>
</dbReference>
<dbReference type="Gene3D" id="6.10.280.130">
    <property type="match status" value="1"/>
</dbReference>
<dbReference type="Gene3D" id="1.10.760.10">
    <property type="entry name" value="Cytochrome c-like domain"/>
    <property type="match status" value="2"/>
</dbReference>
<dbReference type="InterPro" id="IPR032858">
    <property type="entry name" value="CcoP_N"/>
</dbReference>
<dbReference type="InterPro" id="IPR038414">
    <property type="entry name" value="CcoP_N_sf"/>
</dbReference>
<dbReference type="InterPro" id="IPR009056">
    <property type="entry name" value="Cyt_c-like_dom"/>
</dbReference>
<dbReference type="InterPro" id="IPR036909">
    <property type="entry name" value="Cyt_c-like_dom_sf"/>
</dbReference>
<dbReference type="InterPro" id="IPR008168">
    <property type="entry name" value="Cyt_C_IC"/>
</dbReference>
<dbReference type="InterPro" id="IPR004678">
    <property type="entry name" value="Cyt_c_oxidase_cbb3_su3"/>
</dbReference>
<dbReference type="InterPro" id="IPR050597">
    <property type="entry name" value="Cytochrome_c_Oxidase_Subunit"/>
</dbReference>
<dbReference type="NCBIfam" id="TIGR00782">
    <property type="entry name" value="ccoP"/>
    <property type="match status" value="1"/>
</dbReference>
<dbReference type="PANTHER" id="PTHR33751">
    <property type="entry name" value="CBB3-TYPE CYTOCHROME C OXIDASE SUBUNIT FIXP"/>
    <property type="match status" value="1"/>
</dbReference>
<dbReference type="PANTHER" id="PTHR33751:SF1">
    <property type="entry name" value="CBB3-TYPE CYTOCHROME C OXIDASE SUBUNIT FIXP"/>
    <property type="match status" value="1"/>
</dbReference>
<dbReference type="Pfam" id="PF13442">
    <property type="entry name" value="Cytochrome_CBB3"/>
    <property type="match status" value="2"/>
</dbReference>
<dbReference type="Pfam" id="PF14715">
    <property type="entry name" value="FixP_N"/>
    <property type="match status" value="1"/>
</dbReference>
<dbReference type="PIRSF" id="PIRSF000006">
    <property type="entry name" value="Cbb3-Cox_fixP"/>
    <property type="match status" value="1"/>
</dbReference>
<dbReference type="PRINTS" id="PR00605">
    <property type="entry name" value="CYTCHROMECIC"/>
</dbReference>
<dbReference type="SUPFAM" id="SSF46626">
    <property type="entry name" value="Cytochrome c"/>
    <property type="match status" value="2"/>
</dbReference>
<dbReference type="PROSITE" id="PS51007">
    <property type="entry name" value="CYTC"/>
    <property type="match status" value="2"/>
</dbReference>